<sequence>MIEINVYYKKWYSTIKKPKIFVKNVIKSSLINLNIYEYKPIISIVLANNILLQKLNYEYRNKNKPTNVLSFPYDKLNKKCNLGEIFLSLDTLIQESIDLNIPIEHHTCHMLIHGLLHILDYNHEEPLMQYIMESIEIKLLDKLGIRNPYVSRETIYP</sequence>
<keyword id="KW-0963">Cytoplasm</keyword>
<keyword id="KW-0255">Endonuclease</keyword>
<keyword id="KW-0378">Hydrolase</keyword>
<keyword id="KW-0479">Metal-binding</keyword>
<keyword id="KW-0540">Nuclease</keyword>
<keyword id="KW-0690">Ribosome biogenesis</keyword>
<keyword id="KW-0698">rRNA processing</keyword>
<keyword id="KW-0862">Zinc</keyword>
<proteinExistence type="inferred from homology"/>
<evidence type="ECO:0000255" key="1">
    <source>
        <dbReference type="HAMAP-Rule" id="MF_00009"/>
    </source>
</evidence>
<protein>
    <recommendedName>
        <fullName evidence="1">Endoribonuclease YbeY</fullName>
        <ecNumber evidence="1">3.1.-.-</ecNumber>
    </recommendedName>
</protein>
<name>YBEY_EHRRW</name>
<gene>
    <name evidence="1" type="primary">ybeY</name>
    <name type="ordered locus">Erum8820</name>
    <name type="ordered locus">ERWE_CDS_09330</name>
</gene>
<feature type="chain" id="PRO_0000102453" description="Endoribonuclease YbeY">
    <location>
        <begin position="1"/>
        <end position="157"/>
    </location>
</feature>
<feature type="binding site" evidence="1">
    <location>
        <position position="113"/>
    </location>
    <ligand>
        <name>Zn(2+)</name>
        <dbReference type="ChEBI" id="CHEBI:29105"/>
        <note>catalytic</note>
    </ligand>
</feature>
<feature type="binding site" evidence="1">
    <location>
        <position position="117"/>
    </location>
    <ligand>
        <name>Zn(2+)</name>
        <dbReference type="ChEBI" id="CHEBI:29105"/>
        <note>catalytic</note>
    </ligand>
</feature>
<feature type="binding site" evidence="1">
    <location>
        <position position="123"/>
    </location>
    <ligand>
        <name>Zn(2+)</name>
        <dbReference type="ChEBI" id="CHEBI:29105"/>
        <note>catalytic</note>
    </ligand>
</feature>
<reference key="1">
    <citation type="journal article" date="2005" name="Proc. Natl. Acad. Sci. U.S.A.">
        <title>The genome of the heartwater agent Ehrlichia ruminantium contains multiple tandem repeats of actively variable copy number.</title>
        <authorList>
            <person name="Collins N.E."/>
            <person name="Liebenberg J."/>
            <person name="de Villiers E.P."/>
            <person name="Brayton K.A."/>
            <person name="Louw E."/>
            <person name="Pretorius A."/>
            <person name="Faber F.E."/>
            <person name="van Heerden H."/>
            <person name="Josemans A."/>
            <person name="van Kleef M."/>
            <person name="Steyn H.C."/>
            <person name="van Strijp M.F."/>
            <person name="Zweygarth E."/>
            <person name="Jongejan F."/>
            <person name="Maillard J.C."/>
            <person name="Berthier D."/>
            <person name="Botha M."/>
            <person name="Joubert F."/>
            <person name="Corton C.H."/>
            <person name="Thomson N.R."/>
            <person name="Allsopp M.T."/>
            <person name="Allsopp B.A."/>
        </authorList>
    </citation>
    <scope>NUCLEOTIDE SEQUENCE [LARGE SCALE GENOMIC DNA]</scope>
    <source>
        <strain>Welgevonden</strain>
    </source>
</reference>
<reference key="2">
    <citation type="journal article" date="2006" name="J. Bacteriol.">
        <title>Comparative genomic analysis of three strains of Ehrlichia ruminantium reveals an active process of genome size plasticity.</title>
        <authorList>
            <person name="Frutos R."/>
            <person name="Viari A."/>
            <person name="Ferraz C."/>
            <person name="Morgat A."/>
            <person name="Eychenie S."/>
            <person name="Kandassamy Y."/>
            <person name="Chantal I."/>
            <person name="Bensaid A."/>
            <person name="Coissac E."/>
            <person name="Vachiery N."/>
            <person name="Demaille J."/>
            <person name="Martinez D."/>
        </authorList>
    </citation>
    <scope>NUCLEOTIDE SEQUENCE [LARGE SCALE GENOMIC DNA]</scope>
    <source>
        <strain>Welgevonden</strain>
    </source>
</reference>
<organism>
    <name type="scientific">Ehrlichia ruminantium (strain Welgevonden)</name>
    <dbReference type="NCBI Taxonomy" id="254945"/>
    <lineage>
        <taxon>Bacteria</taxon>
        <taxon>Pseudomonadati</taxon>
        <taxon>Pseudomonadota</taxon>
        <taxon>Alphaproteobacteria</taxon>
        <taxon>Rickettsiales</taxon>
        <taxon>Anaplasmataceae</taxon>
        <taxon>Ehrlichia</taxon>
    </lineage>
</organism>
<dbReference type="EC" id="3.1.-.-" evidence="1"/>
<dbReference type="EMBL" id="CR767821">
    <property type="protein sequence ID" value="CAH58617.1"/>
    <property type="molecule type" value="Genomic_DNA"/>
</dbReference>
<dbReference type="EMBL" id="CR925678">
    <property type="protein sequence ID" value="CAI27427.1"/>
    <property type="molecule type" value="Genomic_DNA"/>
</dbReference>
<dbReference type="RefSeq" id="WP_011155560.1">
    <property type="nucleotide sequence ID" value="NC_005295.2"/>
</dbReference>
<dbReference type="SMR" id="Q5HA01"/>
<dbReference type="GeneID" id="33058001"/>
<dbReference type="KEGG" id="eru:Erum8820"/>
<dbReference type="KEGG" id="erw:ERWE_CDS_09330"/>
<dbReference type="eggNOG" id="COG0319">
    <property type="taxonomic scope" value="Bacteria"/>
</dbReference>
<dbReference type="HOGENOM" id="CLU_106710_0_0_5"/>
<dbReference type="Proteomes" id="UP000001021">
    <property type="component" value="Chromosome"/>
</dbReference>
<dbReference type="GO" id="GO:0005737">
    <property type="term" value="C:cytoplasm"/>
    <property type="evidence" value="ECO:0007669"/>
    <property type="project" value="UniProtKB-SubCell"/>
</dbReference>
<dbReference type="GO" id="GO:0004222">
    <property type="term" value="F:metalloendopeptidase activity"/>
    <property type="evidence" value="ECO:0007669"/>
    <property type="project" value="InterPro"/>
</dbReference>
<dbReference type="GO" id="GO:0004521">
    <property type="term" value="F:RNA endonuclease activity"/>
    <property type="evidence" value="ECO:0007669"/>
    <property type="project" value="UniProtKB-UniRule"/>
</dbReference>
<dbReference type="GO" id="GO:0008270">
    <property type="term" value="F:zinc ion binding"/>
    <property type="evidence" value="ECO:0007669"/>
    <property type="project" value="UniProtKB-UniRule"/>
</dbReference>
<dbReference type="GO" id="GO:0006364">
    <property type="term" value="P:rRNA processing"/>
    <property type="evidence" value="ECO:0007669"/>
    <property type="project" value="UniProtKB-UniRule"/>
</dbReference>
<dbReference type="Gene3D" id="3.40.390.30">
    <property type="entry name" value="Metalloproteases ('zincins'), catalytic domain"/>
    <property type="match status" value="1"/>
</dbReference>
<dbReference type="HAMAP" id="MF_00009">
    <property type="entry name" value="Endoribonucl_YbeY"/>
    <property type="match status" value="1"/>
</dbReference>
<dbReference type="InterPro" id="IPR023091">
    <property type="entry name" value="MetalPrtase_cat_dom_sf_prd"/>
</dbReference>
<dbReference type="InterPro" id="IPR002036">
    <property type="entry name" value="YbeY"/>
</dbReference>
<dbReference type="NCBIfam" id="TIGR00043">
    <property type="entry name" value="rRNA maturation RNase YbeY"/>
    <property type="match status" value="1"/>
</dbReference>
<dbReference type="PANTHER" id="PTHR46986">
    <property type="entry name" value="ENDORIBONUCLEASE YBEY, CHLOROPLASTIC"/>
    <property type="match status" value="1"/>
</dbReference>
<dbReference type="PANTHER" id="PTHR46986:SF1">
    <property type="entry name" value="ENDORIBONUCLEASE YBEY, CHLOROPLASTIC"/>
    <property type="match status" value="1"/>
</dbReference>
<dbReference type="Pfam" id="PF02130">
    <property type="entry name" value="YbeY"/>
    <property type="match status" value="1"/>
</dbReference>
<dbReference type="SUPFAM" id="SSF55486">
    <property type="entry name" value="Metalloproteases ('zincins'), catalytic domain"/>
    <property type="match status" value="1"/>
</dbReference>
<accession>Q5HA01</accession>
<accession>Q5FCD0</accession>
<comment type="function">
    <text evidence="1">Single strand-specific metallo-endoribonuclease involved in late-stage 70S ribosome quality control and in maturation of the 3' terminus of the 16S rRNA.</text>
</comment>
<comment type="cofactor">
    <cofactor evidence="1">
        <name>Zn(2+)</name>
        <dbReference type="ChEBI" id="CHEBI:29105"/>
    </cofactor>
    <text evidence="1">Binds 1 zinc ion.</text>
</comment>
<comment type="subcellular location">
    <subcellularLocation>
        <location evidence="1">Cytoplasm</location>
    </subcellularLocation>
</comment>
<comment type="similarity">
    <text evidence="1">Belongs to the endoribonuclease YbeY family.</text>
</comment>